<accession>B1J2G8</accession>
<comment type="function">
    <text evidence="1">Catalyzes the rearrangement of 1-deoxy-D-xylulose 5-phosphate (DXP) to produce the thiazole phosphate moiety of thiamine. Sulfur is provided by the thiocarboxylate moiety of the carrier protein ThiS. In vitro, sulfur can be provided by H(2)S.</text>
</comment>
<comment type="catalytic activity">
    <reaction evidence="1">
        <text>[ThiS sulfur-carrier protein]-C-terminal-Gly-aminoethanethioate + 2-iminoacetate + 1-deoxy-D-xylulose 5-phosphate = [ThiS sulfur-carrier protein]-C-terminal Gly-Gly + 2-[(2R,5Z)-2-carboxy-4-methylthiazol-5(2H)-ylidene]ethyl phosphate + 2 H2O + H(+)</text>
        <dbReference type="Rhea" id="RHEA:26297"/>
        <dbReference type="Rhea" id="RHEA-COMP:12909"/>
        <dbReference type="Rhea" id="RHEA-COMP:19908"/>
        <dbReference type="ChEBI" id="CHEBI:15377"/>
        <dbReference type="ChEBI" id="CHEBI:15378"/>
        <dbReference type="ChEBI" id="CHEBI:57792"/>
        <dbReference type="ChEBI" id="CHEBI:62899"/>
        <dbReference type="ChEBI" id="CHEBI:77846"/>
        <dbReference type="ChEBI" id="CHEBI:90778"/>
        <dbReference type="ChEBI" id="CHEBI:232372"/>
        <dbReference type="EC" id="2.8.1.10"/>
    </reaction>
</comment>
<comment type="pathway">
    <text evidence="1">Cofactor biosynthesis; thiamine diphosphate biosynthesis.</text>
</comment>
<comment type="subunit">
    <text evidence="1">Homotetramer. Forms heterodimers with either ThiH or ThiS.</text>
</comment>
<comment type="subcellular location">
    <subcellularLocation>
        <location evidence="1">Cytoplasm</location>
    </subcellularLocation>
</comment>
<comment type="similarity">
    <text evidence="1">Belongs to the ThiG family.</text>
</comment>
<name>THIG_PSEPW</name>
<sequence>MSNVRSDKPFTLAGRTFQSRLLVGTGKYRDMEETRLAIEASGAEIVTVAVRRTNLGQNPGEPNLLDVLPPDRYTILPNTAGCYDAVEAVRTCRLARELLDGHNLVKLEVLADQKTLFPNVIETLKAAEVLVKDGFDVMVYTSDDPIIARQLAEAGCIAVMPLAGLIGTGLGICNPYNLQIILEESKVPVLVDAGVGTASDATIAMEMGCEAVLMNSAIAHAQQPVLMAEAMKHAIVAGRMAYLAGRMPKKLYASASSPLDGLIK</sequence>
<feature type="chain" id="PRO_1000196887" description="Thiazole synthase">
    <location>
        <begin position="1"/>
        <end position="264"/>
    </location>
</feature>
<feature type="active site" description="Schiff-base intermediate with DXP" evidence="1">
    <location>
        <position position="106"/>
    </location>
</feature>
<feature type="binding site" evidence="1">
    <location>
        <position position="167"/>
    </location>
    <ligand>
        <name>1-deoxy-D-xylulose 5-phosphate</name>
        <dbReference type="ChEBI" id="CHEBI:57792"/>
    </ligand>
</feature>
<feature type="binding site" evidence="1">
    <location>
        <begin position="193"/>
        <end position="194"/>
    </location>
    <ligand>
        <name>1-deoxy-D-xylulose 5-phosphate</name>
        <dbReference type="ChEBI" id="CHEBI:57792"/>
    </ligand>
</feature>
<feature type="binding site" evidence="1">
    <location>
        <begin position="215"/>
        <end position="216"/>
    </location>
    <ligand>
        <name>1-deoxy-D-xylulose 5-phosphate</name>
        <dbReference type="ChEBI" id="CHEBI:57792"/>
    </ligand>
</feature>
<organism>
    <name type="scientific">Pseudomonas putida (strain W619)</name>
    <dbReference type="NCBI Taxonomy" id="390235"/>
    <lineage>
        <taxon>Bacteria</taxon>
        <taxon>Pseudomonadati</taxon>
        <taxon>Pseudomonadota</taxon>
        <taxon>Gammaproteobacteria</taxon>
        <taxon>Pseudomonadales</taxon>
        <taxon>Pseudomonadaceae</taxon>
        <taxon>Pseudomonas</taxon>
    </lineage>
</organism>
<evidence type="ECO:0000255" key="1">
    <source>
        <dbReference type="HAMAP-Rule" id="MF_00443"/>
    </source>
</evidence>
<gene>
    <name evidence="1" type="primary">thiG</name>
    <name type="ordered locus">PputW619_0361</name>
</gene>
<proteinExistence type="inferred from homology"/>
<protein>
    <recommendedName>
        <fullName evidence="1">Thiazole synthase</fullName>
        <ecNumber evidence="1">2.8.1.10</ecNumber>
    </recommendedName>
</protein>
<keyword id="KW-0963">Cytoplasm</keyword>
<keyword id="KW-0704">Schiff base</keyword>
<keyword id="KW-0784">Thiamine biosynthesis</keyword>
<keyword id="KW-0808">Transferase</keyword>
<dbReference type="EC" id="2.8.1.10" evidence="1"/>
<dbReference type="EMBL" id="CP000949">
    <property type="protein sequence ID" value="ACA70867.1"/>
    <property type="molecule type" value="Genomic_DNA"/>
</dbReference>
<dbReference type="SMR" id="B1J2G8"/>
<dbReference type="STRING" id="390235.PputW619_0361"/>
<dbReference type="KEGG" id="ppw:PputW619_0361"/>
<dbReference type="eggNOG" id="COG2022">
    <property type="taxonomic scope" value="Bacteria"/>
</dbReference>
<dbReference type="HOGENOM" id="CLU_062233_1_1_6"/>
<dbReference type="OrthoDB" id="9805935at2"/>
<dbReference type="UniPathway" id="UPA00060"/>
<dbReference type="GO" id="GO:0005737">
    <property type="term" value="C:cytoplasm"/>
    <property type="evidence" value="ECO:0007669"/>
    <property type="project" value="UniProtKB-SubCell"/>
</dbReference>
<dbReference type="GO" id="GO:1990107">
    <property type="term" value="F:thiazole synthase activity"/>
    <property type="evidence" value="ECO:0007669"/>
    <property type="project" value="UniProtKB-EC"/>
</dbReference>
<dbReference type="GO" id="GO:0009229">
    <property type="term" value="P:thiamine diphosphate biosynthetic process"/>
    <property type="evidence" value="ECO:0007669"/>
    <property type="project" value="UniProtKB-UniRule"/>
</dbReference>
<dbReference type="CDD" id="cd04728">
    <property type="entry name" value="ThiG"/>
    <property type="match status" value="1"/>
</dbReference>
<dbReference type="Gene3D" id="3.20.20.70">
    <property type="entry name" value="Aldolase class I"/>
    <property type="match status" value="1"/>
</dbReference>
<dbReference type="HAMAP" id="MF_00443">
    <property type="entry name" value="ThiG"/>
    <property type="match status" value="1"/>
</dbReference>
<dbReference type="InterPro" id="IPR013785">
    <property type="entry name" value="Aldolase_TIM"/>
</dbReference>
<dbReference type="InterPro" id="IPR033983">
    <property type="entry name" value="Thiazole_synthase_ThiG"/>
</dbReference>
<dbReference type="InterPro" id="IPR008867">
    <property type="entry name" value="ThiG"/>
</dbReference>
<dbReference type="PANTHER" id="PTHR34266">
    <property type="entry name" value="THIAZOLE SYNTHASE"/>
    <property type="match status" value="1"/>
</dbReference>
<dbReference type="PANTHER" id="PTHR34266:SF2">
    <property type="entry name" value="THIAZOLE SYNTHASE"/>
    <property type="match status" value="1"/>
</dbReference>
<dbReference type="Pfam" id="PF05690">
    <property type="entry name" value="ThiG"/>
    <property type="match status" value="1"/>
</dbReference>
<dbReference type="SUPFAM" id="SSF110399">
    <property type="entry name" value="ThiG-like"/>
    <property type="match status" value="1"/>
</dbReference>
<reference key="1">
    <citation type="submission" date="2008-02" db="EMBL/GenBank/DDBJ databases">
        <title>Complete sequence of Pseudomonas putida W619.</title>
        <authorList>
            <person name="Copeland A."/>
            <person name="Lucas S."/>
            <person name="Lapidus A."/>
            <person name="Barry K."/>
            <person name="Detter J.C."/>
            <person name="Glavina del Rio T."/>
            <person name="Dalin E."/>
            <person name="Tice H."/>
            <person name="Pitluck S."/>
            <person name="Chain P."/>
            <person name="Malfatti S."/>
            <person name="Shin M."/>
            <person name="Vergez L."/>
            <person name="Schmutz J."/>
            <person name="Larimer F."/>
            <person name="Land M."/>
            <person name="Hauser L."/>
            <person name="Kyrpides N."/>
            <person name="Kim E."/>
            <person name="Taghavi S."/>
            <person name="Vangronsveld D."/>
            <person name="van der Lelie D."/>
            <person name="Richardson P."/>
        </authorList>
    </citation>
    <scope>NUCLEOTIDE SEQUENCE [LARGE SCALE GENOMIC DNA]</scope>
    <source>
        <strain>W619</strain>
    </source>
</reference>